<comment type="function">
    <text evidence="1">Forms part of the ribosomal stalk which helps the ribosome interact with GTP-bound translation factors. Is thus essential for accurate translation.</text>
</comment>
<comment type="subunit">
    <text evidence="1">Homodimer. Part of the ribosomal stalk of the 50S ribosomal subunit. Forms a multimeric L10(L12)X complex, where L10 forms an elongated spine to which 2 to 4 L12 dimers bind in a sequential fashion. Binds GTP-bound translation factors.</text>
</comment>
<comment type="similarity">
    <text evidence="1">Belongs to the bacterial ribosomal protein bL12 family.</text>
</comment>
<evidence type="ECO:0000255" key="1">
    <source>
        <dbReference type="HAMAP-Rule" id="MF_00368"/>
    </source>
</evidence>
<evidence type="ECO:0000305" key="2"/>
<dbReference type="EMBL" id="CP000529">
    <property type="protein sequence ID" value="ABM38937.1"/>
    <property type="molecule type" value="Genomic_DNA"/>
</dbReference>
<dbReference type="RefSeq" id="WP_011803004.1">
    <property type="nucleotide sequence ID" value="NC_008781.1"/>
</dbReference>
<dbReference type="SMR" id="A1VTF9"/>
<dbReference type="STRING" id="365044.Pnap_3641"/>
<dbReference type="KEGG" id="pna:Pnap_3641"/>
<dbReference type="eggNOG" id="COG0222">
    <property type="taxonomic scope" value="Bacteria"/>
</dbReference>
<dbReference type="HOGENOM" id="CLU_086499_3_2_4"/>
<dbReference type="OrthoDB" id="9811748at2"/>
<dbReference type="Proteomes" id="UP000000644">
    <property type="component" value="Chromosome"/>
</dbReference>
<dbReference type="GO" id="GO:0022625">
    <property type="term" value="C:cytosolic large ribosomal subunit"/>
    <property type="evidence" value="ECO:0007669"/>
    <property type="project" value="TreeGrafter"/>
</dbReference>
<dbReference type="GO" id="GO:0003729">
    <property type="term" value="F:mRNA binding"/>
    <property type="evidence" value="ECO:0007669"/>
    <property type="project" value="TreeGrafter"/>
</dbReference>
<dbReference type="GO" id="GO:0003735">
    <property type="term" value="F:structural constituent of ribosome"/>
    <property type="evidence" value="ECO:0007669"/>
    <property type="project" value="InterPro"/>
</dbReference>
<dbReference type="GO" id="GO:0006412">
    <property type="term" value="P:translation"/>
    <property type="evidence" value="ECO:0007669"/>
    <property type="project" value="UniProtKB-UniRule"/>
</dbReference>
<dbReference type="CDD" id="cd00387">
    <property type="entry name" value="Ribosomal_L7_L12"/>
    <property type="match status" value="1"/>
</dbReference>
<dbReference type="FunFam" id="3.30.1390.10:FF:000001">
    <property type="entry name" value="50S ribosomal protein L7/L12"/>
    <property type="match status" value="1"/>
</dbReference>
<dbReference type="Gene3D" id="3.30.1390.10">
    <property type="match status" value="1"/>
</dbReference>
<dbReference type="Gene3D" id="1.20.5.710">
    <property type="entry name" value="Single helix bin"/>
    <property type="match status" value="1"/>
</dbReference>
<dbReference type="HAMAP" id="MF_00368">
    <property type="entry name" value="Ribosomal_bL12"/>
    <property type="match status" value="1"/>
</dbReference>
<dbReference type="InterPro" id="IPR000206">
    <property type="entry name" value="Ribosomal_bL12"/>
</dbReference>
<dbReference type="InterPro" id="IPR013823">
    <property type="entry name" value="Ribosomal_bL12_C"/>
</dbReference>
<dbReference type="InterPro" id="IPR014719">
    <property type="entry name" value="Ribosomal_bL12_C/ClpS-like"/>
</dbReference>
<dbReference type="InterPro" id="IPR008932">
    <property type="entry name" value="Ribosomal_bL12_oligo"/>
</dbReference>
<dbReference type="InterPro" id="IPR036235">
    <property type="entry name" value="Ribosomal_bL12_oligo_N_sf"/>
</dbReference>
<dbReference type="NCBIfam" id="TIGR00855">
    <property type="entry name" value="L12"/>
    <property type="match status" value="1"/>
</dbReference>
<dbReference type="PANTHER" id="PTHR45987">
    <property type="entry name" value="39S RIBOSOMAL PROTEIN L12"/>
    <property type="match status" value="1"/>
</dbReference>
<dbReference type="PANTHER" id="PTHR45987:SF4">
    <property type="entry name" value="LARGE RIBOSOMAL SUBUNIT PROTEIN BL12M"/>
    <property type="match status" value="1"/>
</dbReference>
<dbReference type="Pfam" id="PF00542">
    <property type="entry name" value="Ribosomal_L12"/>
    <property type="match status" value="1"/>
</dbReference>
<dbReference type="Pfam" id="PF16320">
    <property type="entry name" value="Ribosomal_L12_N"/>
    <property type="match status" value="1"/>
</dbReference>
<dbReference type="SUPFAM" id="SSF54736">
    <property type="entry name" value="ClpS-like"/>
    <property type="match status" value="1"/>
</dbReference>
<dbReference type="SUPFAM" id="SSF48300">
    <property type="entry name" value="Ribosomal protein L7/12, oligomerisation (N-terminal) domain"/>
    <property type="match status" value="1"/>
</dbReference>
<proteinExistence type="inferred from homology"/>
<protein>
    <recommendedName>
        <fullName evidence="1">Large ribosomal subunit protein bL12</fullName>
    </recommendedName>
    <alternativeName>
        <fullName evidence="2">50S ribosomal protein L7/L12</fullName>
    </alternativeName>
</protein>
<reference key="1">
    <citation type="journal article" date="2009" name="Environ. Microbiol.">
        <title>The genome of Polaromonas naphthalenivorans strain CJ2, isolated from coal tar-contaminated sediment, reveals physiological and metabolic versatility and evolution through extensive horizontal gene transfer.</title>
        <authorList>
            <person name="Yagi J.M."/>
            <person name="Sims D."/>
            <person name="Brettin T."/>
            <person name="Bruce D."/>
            <person name="Madsen E.L."/>
        </authorList>
    </citation>
    <scope>NUCLEOTIDE SEQUENCE [LARGE SCALE GENOMIC DNA]</scope>
    <source>
        <strain>CJ2</strain>
    </source>
</reference>
<keyword id="KW-1185">Reference proteome</keyword>
<keyword id="KW-0687">Ribonucleoprotein</keyword>
<keyword id="KW-0689">Ribosomal protein</keyword>
<name>RL7_POLNA</name>
<sequence>MAFDKDAFLTVLDSMTVLELNDLVKAIEEKFGVSAASMAAPAAGGGGAGAAVAEEKTEFNVVLLEAGAQKVQVIKAVRELTGLGLKEAKDLVDGAPKNVKEGANKADAEAAKKKLEDAGAKVELK</sequence>
<feature type="chain" id="PRO_1000007054" description="Large ribosomal subunit protein bL12">
    <location>
        <begin position="1"/>
        <end position="125"/>
    </location>
</feature>
<accession>A1VTF9</accession>
<organism>
    <name type="scientific">Polaromonas naphthalenivorans (strain CJ2)</name>
    <dbReference type="NCBI Taxonomy" id="365044"/>
    <lineage>
        <taxon>Bacteria</taxon>
        <taxon>Pseudomonadati</taxon>
        <taxon>Pseudomonadota</taxon>
        <taxon>Betaproteobacteria</taxon>
        <taxon>Burkholderiales</taxon>
        <taxon>Comamonadaceae</taxon>
        <taxon>Polaromonas</taxon>
    </lineage>
</organism>
<gene>
    <name evidence="1" type="primary">rplL</name>
    <name type="ordered locus">Pnap_3641</name>
</gene>